<proteinExistence type="evidence at protein level"/>
<feature type="chain" id="PRO_0000064610" description="Antibacterial 6.5 kDa protein">
    <location>
        <begin position="1"/>
        <end position="30" status="greater than"/>
    </location>
</feature>
<feature type="region of interest" description="Disordered" evidence="1">
    <location>
        <begin position="1"/>
        <end position="30"/>
    </location>
</feature>
<feature type="compositionally biased region" description="Pro residues" evidence="1">
    <location>
        <begin position="1"/>
        <end position="21"/>
    </location>
</feature>
<feature type="non-terminal residue">
    <location>
        <position position="30"/>
    </location>
</feature>
<organism>
    <name type="scientific">Carcinus maenas</name>
    <name type="common">Common shore crab</name>
    <name type="synonym">Green crab</name>
    <dbReference type="NCBI Taxonomy" id="6759"/>
    <lineage>
        <taxon>Eukaryota</taxon>
        <taxon>Metazoa</taxon>
        <taxon>Ecdysozoa</taxon>
        <taxon>Arthropoda</taxon>
        <taxon>Crustacea</taxon>
        <taxon>Multicrustacea</taxon>
        <taxon>Malacostraca</taxon>
        <taxon>Eumalacostraca</taxon>
        <taxon>Eucarida</taxon>
        <taxon>Decapoda</taxon>
        <taxon>Pleocyemata</taxon>
        <taxon>Brachyura</taxon>
        <taxon>Eubrachyura</taxon>
        <taxon>Portunoidea</taxon>
        <taxon>Carcinidae</taxon>
        <taxon>Carcinus</taxon>
    </lineage>
</organism>
<comment type="function">
    <text evidence="2">Strong antimicrobial activity against P.immobilis and M.luteus, less active against E.coli D22.</text>
</comment>
<comment type="miscellaneous">
    <text>On the 2D-gel the determined MW is: 6.5 kDa.</text>
</comment>
<comment type="similarity">
    <text evidence="3">To bovine bactenecin 7.</text>
</comment>
<dbReference type="PIR" id="S74112">
    <property type="entry name" value="S74112"/>
</dbReference>
<dbReference type="GO" id="GO:0042742">
    <property type="term" value="P:defense response to bacterium"/>
    <property type="evidence" value="ECO:0007669"/>
    <property type="project" value="UniProtKB-KW"/>
</dbReference>
<reference key="1">
    <citation type="journal article" date="1996" name="Eur. J. Biochem.">
        <title>Purification and characterization of a proline-rich antibacterial peptide, with sequence similarity to bactenecin-7, from the haemocytes of the shore crab, Carcinus maenas.</title>
        <authorList>
            <person name="Schnapp D."/>
            <person name="Kemp G.D."/>
            <person name="Smith V.J."/>
        </authorList>
    </citation>
    <scope>PROTEIN SEQUENCE</scope>
    <scope>FUNCTION</scope>
    <source>
        <tissue>Hemocyte</tissue>
    </source>
</reference>
<protein>
    <recommendedName>
        <fullName>Antibacterial 6.5 kDa protein</fullName>
    </recommendedName>
</protein>
<evidence type="ECO:0000256" key="1">
    <source>
        <dbReference type="SAM" id="MobiDB-lite"/>
    </source>
</evidence>
<evidence type="ECO:0000269" key="2">
    <source>
    </source>
</evidence>
<evidence type="ECO:0000305" key="3"/>
<accession>P82964</accession>
<keyword id="KW-0044">Antibiotic</keyword>
<keyword id="KW-0929">Antimicrobial</keyword>
<keyword id="KW-0903">Direct protein sequencing</keyword>
<sequence length="30" mass="3307">XXVPYPRPFPRPPIGPRPLPFPGGGRPFQS</sequence>
<name>AP65_CARMA</name>